<proteinExistence type="inferred from homology"/>
<feature type="chain" id="PRO_1000076688" description="DNA mismatch repair protein MutL">
    <location>
        <begin position="1"/>
        <end position="649"/>
    </location>
</feature>
<feature type="region of interest" description="Disordered" evidence="2">
    <location>
        <begin position="339"/>
        <end position="414"/>
    </location>
</feature>
<feature type="compositionally biased region" description="Basic and acidic residues" evidence="2">
    <location>
        <begin position="342"/>
        <end position="360"/>
    </location>
</feature>
<feature type="compositionally biased region" description="Low complexity" evidence="2">
    <location>
        <begin position="388"/>
        <end position="402"/>
    </location>
</feature>
<sequence>MGKIRKLDEQLSNLIAAGEVVERPASVVKELVENSIDANSTSIEIHLEEAGLSKIRIIDNGDGIAEEDCIVAFERHATSKIKDENDLFRIRTLGFRGEALPSIASVSELELVTSTGDAPGTHLIIKGGEIIKQEKTASRKGTDITVQNLFFNTPARLKYMKTIHTELGNITDIVYRIAMSHPEVSLKLFHNTKKLLHTSGNGDVRQVLAAIYSIQVAKKLIPIEAESLDFTIRGYVTLPEVTRASRNYMSTIVNGRYVRNYVLMKAIQQGYHTLLPVGRYPIGFLSIEMDPMLVDVNVHPAKLEVRFSKEQELLQFIEQTLQDAFKKVQLIPDAGVTTKKKTKDESVQEQFHFEHTKPKEPSMPNIVLPTGMDEAQEEESAEKPSVAPQLWQQPKQEWQPPQSLVREEESWQSTSKPLIEEKAAHNEQEWDHHEEEFELEELDELQNIEEIEMNGNDLPPLYPIGQMHGTYIFAQNDKGLYMIDQHAAQERINYEYFRDKVGQVTQEVQELLVPYRIDLSLNEFLRVEEQLEELKKVGLFLEQFGHQSFIVRSHPIWFPKGKETEIIDEMMQQVVKLKKVDIKKLREEAAIMMSCKASIKANQYLTNDQIFALLEELRTTSNPYTCPHGRPIIIHHSTYELEKMFKRVM</sequence>
<gene>
    <name evidence="1" type="primary">mutL</name>
    <name type="ordered locus">Bcer98_2420</name>
</gene>
<comment type="function">
    <text evidence="1">This protein is involved in the repair of mismatches in DNA. It is required for dam-dependent methyl-directed DNA mismatch repair. May act as a 'molecular matchmaker', a protein that promotes the formation of a stable complex between two or more DNA-binding proteins in an ATP-dependent manner without itself being part of a final effector complex.</text>
</comment>
<comment type="similarity">
    <text evidence="1">Belongs to the DNA mismatch repair MutL/HexB family.</text>
</comment>
<organism>
    <name type="scientific">Bacillus cytotoxicus (strain DSM 22905 / CIP 110041 / 391-98 / NVH 391-98)</name>
    <dbReference type="NCBI Taxonomy" id="315749"/>
    <lineage>
        <taxon>Bacteria</taxon>
        <taxon>Bacillati</taxon>
        <taxon>Bacillota</taxon>
        <taxon>Bacilli</taxon>
        <taxon>Bacillales</taxon>
        <taxon>Bacillaceae</taxon>
        <taxon>Bacillus</taxon>
        <taxon>Bacillus cereus group</taxon>
    </lineage>
</organism>
<reference key="1">
    <citation type="journal article" date="2008" name="Chem. Biol. Interact.">
        <title>Extending the Bacillus cereus group genomics to putative food-borne pathogens of different toxicity.</title>
        <authorList>
            <person name="Lapidus A."/>
            <person name="Goltsman E."/>
            <person name="Auger S."/>
            <person name="Galleron N."/>
            <person name="Segurens B."/>
            <person name="Dossat C."/>
            <person name="Land M.L."/>
            <person name="Broussolle V."/>
            <person name="Brillard J."/>
            <person name="Guinebretiere M.-H."/>
            <person name="Sanchis V."/>
            <person name="Nguen-the C."/>
            <person name="Lereclus D."/>
            <person name="Richardson P."/>
            <person name="Wincker P."/>
            <person name="Weissenbach J."/>
            <person name="Ehrlich S.D."/>
            <person name="Sorokin A."/>
        </authorList>
    </citation>
    <scope>NUCLEOTIDE SEQUENCE [LARGE SCALE GENOMIC DNA]</scope>
    <source>
        <strain>DSM 22905 / CIP 110041 / 391-98 / NVH 391-98</strain>
    </source>
</reference>
<name>MUTL_BACCN</name>
<evidence type="ECO:0000255" key="1">
    <source>
        <dbReference type="HAMAP-Rule" id="MF_00149"/>
    </source>
</evidence>
<evidence type="ECO:0000256" key="2">
    <source>
        <dbReference type="SAM" id="MobiDB-lite"/>
    </source>
</evidence>
<keyword id="KW-0227">DNA damage</keyword>
<keyword id="KW-0234">DNA repair</keyword>
<dbReference type="EMBL" id="CP000764">
    <property type="protein sequence ID" value="ABS22656.1"/>
    <property type="molecule type" value="Genomic_DNA"/>
</dbReference>
<dbReference type="RefSeq" id="WP_012094855.1">
    <property type="nucleotide sequence ID" value="NC_009674.1"/>
</dbReference>
<dbReference type="SMR" id="A7GR98"/>
<dbReference type="STRING" id="315749.Bcer98_2420"/>
<dbReference type="GeneID" id="33897675"/>
<dbReference type="KEGG" id="bcy:Bcer98_2420"/>
<dbReference type="eggNOG" id="COG0323">
    <property type="taxonomic scope" value="Bacteria"/>
</dbReference>
<dbReference type="HOGENOM" id="CLU_004131_4_1_9"/>
<dbReference type="OrthoDB" id="9763467at2"/>
<dbReference type="Proteomes" id="UP000002300">
    <property type="component" value="Chromosome"/>
</dbReference>
<dbReference type="GO" id="GO:0032300">
    <property type="term" value="C:mismatch repair complex"/>
    <property type="evidence" value="ECO:0007669"/>
    <property type="project" value="InterPro"/>
</dbReference>
<dbReference type="GO" id="GO:0005524">
    <property type="term" value="F:ATP binding"/>
    <property type="evidence" value="ECO:0007669"/>
    <property type="project" value="InterPro"/>
</dbReference>
<dbReference type="GO" id="GO:0016887">
    <property type="term" value="F:ATP hydrolysis activity"/>
    <property type="evidence" value="ECO:0007669"/>
    <property type="project" value="InterPro"/>
</dbReference>
<dbReference type="GO" id="GO:0140664">
    <property type="term" value="F:ATP-dependent DNA damage sensor activity"/>
    <property type="evidence" value="ECO:0007669"/>
    <property type="project" value="InterPro"/>
</dbReference>
<dbReference type="GO" id="GO:0030983">
    <property type="term" value="F:mismatched DNA binding"/>
    <property type="evidence" value="ECO:0007669"/>
    <property type="project" value="InterPro"/>
</dbReference>
<dbReference type="GO" id="GO:0006298">
    <property type="term" value="P:mismatch repair"/>
    <property type="evidence" value="ECO:0007669"/>
    <property type="project" value="UniProtKB-UniRule"/>
</dbReference>
<dbReference type="CDD" id="cd16926">
    <property type="entry name" value="HATPase_MutL-MLH-PMS-like"/>
    <property type="match status" value="1"/>
</dbReference>
<dbReference type="CDD" id="cd00782">
    <property type="entry name" value="MutL_Trans"/>
    <property type="match status" value="1"/>
</dbReference>
<dbReference type="FunFam" id="3.30.1370.100:FF:000004">
    <property type="entry name" value="DNA mismatch repair endonuclease MutL"/>
    <property type="match status" value="1"/>
</dbReference>
<dbReference type="FunFam" id="3.30.230.10:FF:000036">
    <property type="entry name" value="DNA mismatch repair endonuclease MutL"/>
    <property type="match status" value="1"/>
</dbReference>
<dbReference type="FunFam" id="3.30.565.10:FF:000003">
    <property type="entry name" value="DNA mismatch repair endonuclease MutL"/>
    <property type="match status" value="1"/>
</dbReference>
<dbReference type="Gene3D" id="3.30.230.10">
    <property type="match status" value="1"/>
</dbReference>
<dbReference type="Gene3D" id="3.30.565.10">
    <property type="entry name" value="Histidine kinase-like ATPase, C-terminal domain"/>
    <property type="match status" value="1"/>
</dbReference>
<dbReference type="Gene3D" id="3.30.1540.20">
    <property type="entry name" value="MutL, C-terminal domain, dimerisation subdomain"/>
    <property type="match status" value="1"/>
</dbReference>
<dbReference type="Gene3D" id="3.30.1370.100">
    <property type="entry name" value="MutL, C-terminal domain, regulatory subdomain"/>
    <property type="match status" value="1"/>
</dbReference>
<dbReference type="HAMAP" id="MF_00149">
    <property type="entry name" value="DNA_mis_repair"/>
    <property type="match status" value="1"/>
</dbReference>
<dbReference type="InterPro" id="IPR014762">
    <property type="entry name" value="DNA_mismatch_repair_CS"/>
</dbReference>
<dbReference type="InterPro" id="IPR020667">
    <property type="entry name" value="DNA_mismatch_repair_MutL"/>
</dbReference>
<dbReference type="InterPro" id="IPR013507">
    <property type="entry name" value="DNA_mismatch_S5_2-like"/>
</dbReference>
<dbReference type="InterPro" id="IPR036890">
    <property type="entry name" value="HATPase_C_sf"/>
</dbReference>
<dbReference type="InterPro" id="IPR002099">
    <property type="entry name" value="MutL/Mlh/PMS"/>
</dbReference>
<dbReference type="InterPro" id="IPR038973">
    <property type="entry name" value="MutL/Mlh/Pms-like"/>
</dbReference>
<dbReference type="InterPro" id="IPR014790">
    <property type="entry name" value="MutL_C"/>
</dbReference>
<dbReference type="InterPro" id="IPR042120">
    <property type="entry name" value="MutL_C_dimsub"/>
</dbReference>
<dbReference type="InterPro" id="IPR042121">
    <property type="entry name" value="MutL_C_regsub"/>
</dbReference>
<dbReference type="InterPro" id="IPR037198">
    <property type="entry name" value="MutL_C_sf"/>
</dbReference>
<dbReference type="InterPro" id="IPR020568">
    <property type="entry name" value="Ribosomal_Su5_D2-typ_SF"/>
</dbReference>
<dbReference type="InterPro" id="IPR014721">
    <property type="entry name" value="Ribsml_uS5_D2-typ_fold_subgr"/>
</dbReference>
<dbReference type="NCBIfam" id="TIGR00585">
    <property type="entry name" value="mutl"/>
    <property type="match status" value="1"/>
</dbReference>
<dbReference type="NCBIfam" id="NF000950">
    <property type="entry name" value="PRK00095.1-3"/>
    <property type="match status" value="1"/>
</dbReference>
<dbReference type="PANTHER" id="PTHR10073">
    <property type="entry name" value="DNA MISMATCH REPAIR PROTEIN MLH, PMS, MUTL"/>
    <property type="match status" value="1"/>
</dbReference>
<dbReference type="PANTHER" id="PTHR10073:SF12">
    <property type="entry name" value="DNA MISMATCH REPAIR PROTEIN MLH1"/>
    <property type="match status" value="1"/>
</dbReference>
<dbReference type="Pfam" id="PF01119">
    <property type="entry name" value="DNA_mis_repair"/>
    <property type="match status" value="1"/>
</dbReference>
<dbReference type="Pfam" id="PF13589">
    <property type="entry name" value="HATPase_c_3"/>
    <property type="match status" value="1"/>
</dbReference>
<dbReference type="Pfam" id="PF08676">
    <property type="entry name" value="MutL_C"/>
    <property type="match status" value="1"/>
</dbReference>
<dbReference type="SMART" id="SM01340">
    <property type="entry name" value="DNA_mis_repair"/>
    <property type="match status" value="1"/>
</dbReference>
<dbReference type="SMART" id="SM00853">
    <property type="entry name" value="MutL_C"/>
    <property type="match status" value="1"/>
</dbReference>
<dbReference type="SUPFAM" id="SSF55874">
    <property type="entry name" value="ATPase domain of HSP90 chaperone/DNA topoisomerase II/histidine kinase"/>
    <property type="match status" value="1"/>
</dbReference>
<dbReference type="SUPFAM" id="SSF118116">
    <property type="entry name" value="DNA mismatch repair protein MutL"/>
    <property type="match status" value="1"/>
</dbReference>
<dbReference type="SUPFAM" id="SSF54211">
    <property type="entry name" value="Ribosomal protein S5 domain 2-like"/>
    <property type="match status" value="1"/>
</dbReference>
<dbReference type="PROSITE" id="PS00058">
    <property type="entry name" value="DNA_MISMATCH_REPAIR_1"/>
    <property type="match status" value="1"/>
</dbReference>
<protein>
    <recommendedName>
        <fullName evidence="1">DNA mismatch repair protein MutL</fullName>
    </recommendedName>
</protein>
<accession>A7GR98</accession>